<feature type="chain" id="PRO_1000008036" description="Sugar fermentation stimulation protein homolog">
    <location>
        <begin position="1"/>
        <end position="239"/>
    </location>
</feature>
<gene>
    <name evidence="1" type="primary">sfsA</name>
    <name type="ordered locus">Smed_1457</name>
</gene>
<protein>
    <recommendedName>
        <fullName evidence="1">Sugar fermentation stimulation protein homolog</fullName>
    </recommendedName>
</protein>
<sequence>MKFTGPLVPATLVQRYKRFLFDAILTDGTAITGSCPNTGSMRGLTTPGSRIWLSEHDSTTRKYRHMLEIVEADGTLVGINTGLPNRIAEEAISAGQVSNLDSYDTLRREQRYGRNSRIDILLSDAEKGLAYVEVKNVHFSRLSGLAEFPDSPTERGAKHLEELGDMVAAGHRAIMLYLVQRDDCSRFRICRELDPVYARAFERASTRGVEAYAVKCQVSPLQIVATGPMMVDEAVPAVL</sequence>
<name>SFSA_SINMW</name>
<dbReference type="EMBL" id="CP000738">
    <property type="protein sequence ID" value="ABR60302.1"/>
    <property type="molecule type" value="Genomic_DNA"/>
</dbReference>
<dbReference type="RefSeq" id="WP_011975612.1">
    <property type="nucleotide sequence ID" value="NC_009636.1"/>
</dbReference>
<dbReference type="RefSeq" id="YP_001327137.1">
    <property type="nucleotide sequence ID" value="NC_009636.1"/>
</dbReference>
<dbReference type="SMR" id="A6U9H2"/>
<dbReference type="STRING" id="366394.Smed_1457"/>
<dbReference type="KEGG" id="smd:Smed_1457"/>
<dbReference type="PATRIC" id="fig|366394.8.peg.4589"/>
<dbReference type="eggNOG" id="COG1489">
    <property type="taxonomic scope" value="Bacteria"/>
</dbReference>
<dbReference type="HOGENOM" id="CLU_052299_2_0_5"/>
<dbReference type="OrthoDB" id="9802365at2"/>
<dbReference type="Proteomes" id="UP000001108">
    <property type="component" value="Chromosome"/>
</dbReference>
<dbReference type="GO" id="GO:0003677">
    <property type="term" value="F:DNA binding"/>
    <property type="evidence" value="ECO:0007669"/>
    <property type="project" value="InterPro"/>
</dbReference>
<dbReference type="CDD" id="cd22359">
    <property type="entry name" value="SfsA-like_bacterial"/>
    <property type="match status" value="1"/>
</dbReference>
<dbReference type="Gene3D" id="2.40.50.580">
    <property type="match status" value="1"/>
</dbReference>
<dbReference type="Gene3D" id="3.40.1350.60">
    <property type="match status" value="1"/>
</dbReference>
<dbReference type="HAMAP" id="MF_00095">
    <property type="entry name" value="SfsA"/>
    <property type="match status" value="1"/>
</dbReference>
<dbReference type="InterPro" id="IPR005224">
    <property type="entry name" value="SfsA"/>
</dbReference>
<dbReference type="InterPro" id="IPR040452">
    <property type="entry name" value="SfsA_C"/>
</dbReference>
<dbReference type="InterPro" id="IPR041465">
    <property type="entry name" value="SfsA_N"/>
</dbReference>
<dbReference type="NCBIfam" id="TIGR00230">
    <property type="entry name" value="sfsA"/>
    <property type="match status" value="1"/>
</dbReference>
<dbReference type="PANTHER" id="PTHR30545">
    <property type="entry name" value="SUGAR FERMENTATION STIMULATION PROTEIN A"/>
    <property type="match status" value="1"/>
</dbReference>
<dbReference type="PANTHER" id="PTHR30545:SF2">
    <property type="entry name" value="SUGAR FERMENTATION STIMULATION PROTEIN A"/>
    <property type="match status" value="1"/>
</dbReference>
<dbReference type="Pfam" id="PF03749">
    <property type="entry name" value="SfsA"/>
    <property type="match status" value="1"/>
</dbReference>
<dbReference type="Pfam" id="PF17746">
    <property type="entry name" value="SfsA_N"/>
    <property type="match status" value="1"/>
</dbReference>
<evidence type="ECO:0000255" key="1">
    <source>
        <dbReference type="HAMAP-Rule" id="MF_00095"/>
    </source>
</evidence>
<organism>
    <name type="scientific">Sinorhizobium medicae (strain WSM419)</name>
    <name type="common">Ensifer medicae</name>
    <dbReference type="NCBI Taxonomy" id="366394"/>
    <lineage>
        <taxon>Bacteria</taxon>
        <taxon>Pseudomonadati</taxon>
        <taxon>Pseudomonadota</taxon>
        <taxon>Alphaproteobacteria</taxon>
        <taxon>Hyphomicrobiales</taxon>
        <taxon>Rhizobiaceae</taxon>
        <taxon>Sinorhizobium/Ensifer group</taxon>
        <taxon>Sinorhizobium</taxon>
    </lineage>
</organism>
<comment type="similarity">
    <text evidence="1">Belongs to the SfsA family.</text>
</comment>
<proteinExistence type="inferred from homology"/>
<accession>A6U9H2</accession>
<reference key="1">
    <citation type="submission" date="2007-06" db="EMBL/GenBank/DDBJ databases">
        <title>Complete sequence of Sinorhizobium medicae WSM419 chromosome.</title>
        <authorList>
            <consortium name="US DOE Joint Genome Institute"/>
            <person name="Copeland A."/>
            <person name="Lucas S."/>
            <person name="Lapidus A."/>
            <person name="Barry K."/>
            <person name="Glavina del Rio T."/>
            <person name="Dalin E."/>
            <person name="Tice H."/>
            <person name="Pitluck S."/>
            <person name="Chain P."/>
            <person name="Malfatti S."/>
            <person name="Shin M."/>
            <person name="Vergez L."/>
            <person name="Schmutz J."/>
            <person name="Larimer F."/>
            <person name="Land M."/>
            <person name="Hauser L."/>
            <person name="Kyrpides N."/>
            <person name="Mikhailova N."/>
            <person name="Reeve W.G."/>
            <person name="Richardson P."/>
        </authorList>
    </citation>
    <scope>NUCLEOTIDE SEQUENCE [LARGE SCALE GENOMIC DNA]</scope>
    <source>
        <strain>WSM419</strain>
    </source>
</reference>